<reference key="1">
    <citation type="journal article" date="2005" name="Nature">
        <title>Generation and annotation of the DNA sequences of human chromosomes 2 and 4.</title>
        <authorList>
            <person name="Hillier L.W."/>
            <person name="Graves T.A."/>
            <person name="Fulton R.S."/>
            <person name="Fulton L.A."/>
            <person name="Pepin K.H."/>
            <person name="Minx P."/>
            <person name="Wagner-McPherson C."/>
            <person name="Layman D."/>
            <person name="Wylie K."/>
            <person name="Sekhon M."/>
            <person name="Becker M.C."/>
            <person name="Fewell G.A."/>
            <person name="Delehaunty K.D."/>
            <person name="Miner T.L."/>
            <person name="Nash W.E."/>
            <person name="Kremitzki C."/>
            <person name="Oddy L."/>
            <person name="Du H."/>
            <person name="Sun H."/>
            <person name="Bradshaw-Cordum H."/>
            <person name="Ali J."/>
            <person name="Carter J."/>
            <person name="Cordes M."/>
            <person name="Harris A."/>
            <person name="Isak A."/>
            <person name="van Brunt A."/>
            <person name="Nguyen C."/>
            <person name="Du F."/>
            <person name="Courtney L."/>
            <person name="Kalicki J."/>
            <person name="Ozersky P."/>
            <person name="Abbott S."/>
            <person name="Armstrong J."/>
            <person name="Belter E.A."/>
            <person name="Caruso L."/>
            <person name="Cedroni M."/>
            <person name="Cotton M."/>
            <person name="Davidson T."/>
            <person name="Desai A."/>
            <person name="Elliott G."/>
            <person name="Erb T."/>
            <person name="Fronick C."/>
            <person name="Gaige T."/>
            <person name="Haakenson W."/>
            <person name="Haglund K."/>
            <person name="Holmes A."/>
            <person name="Harkins R."/>
            <person name="Kim K."/>
            <person name="Kruchowski S.S."/>
            <person name="Strong C.M."/>
            <person name="Grewal N."/>
            <person name="Goyea E."/>
            <person name="Hou S."/>
            <person name="Levy A."/>
            <person name="Martinka S."/>
            <person name="Mead K."/>
            <person name="McLellan M.D."/>
            <person name="Meyer R."/>
            <person name="Randall-Maher J."/>
            <person name="Tomlinson C."/>
            <person name="Dauphin-Kohlberg S."/>
            <person name="Kozlowicz-Reilly A."/>
            <person name="Shah N."/>
            <person name="Swearengen-Shahid S."/>
            <person name="Snider J."/>
            <person name="Strong J.T."/>
            <person name="Thompson J."/>
            <person name="Yoakum M."/>
            <person name="Leonard S."/>
            <person name="Pearman C."/>
            <person name="Trani L."/>
            <person name="Radionenko M."/>
            <person name="Waligorski J.E."/>
            <person name="Wang C."/>
            <person name="Rock S.M."/>
            <person name="Tin-Wollam A.-M."/>
            <person name="Maupin R."/>
            <person name="Latreille P."/>
            <person name="Wendl M.C."/>
            <person name="Yang S.-P."/>
            <person name="Pohl C."/>
            <person name="Wallis J.W."/>
            <person name="Spieth J."/>
            <person name="Bieri T.A."/>
            <person name="Berkowicz N."/>
            <person name="Nelson J.O."/>
            <person name="Osborne J."/>
            <person name="Ding L."/>
            <person name="Meyer R."/>
            <person name="Sabo A."/>
            <person name="Shotland Y."/>
            <person name="Sinha P."/>
            <person name="Wohldmann P.E."/>
            <person name="Cook L.L."/>
            <person name="Hickenbotham M.T."/>
            <person name="Eldred J."/>
            <person name="Williams D."/>
            <person name="Jones T.A."/>
            <person name="She X."/>
            <person name="Ciccarelli F.D."/>
            <person name="Izaurralde E."/>
            <person name="Taylor J."/>
            <person name="Schmutz J."/>
            <person name="Myers R.M."/>
            <person name="Cox D.R."/>
            <person name="Huang X."/>
            <person name="McPherson J.D."/>
            <person name="Mardis E.R."/>
            <person name="Clifton S.W."/>
            <person name="Warren W.C."/>
            <person name="Chinwalla A.T."/>
            <person name="Eddy S.R."/>
            <person name="Marra M.A."/>
            <person name="Ovcharenko I."/>
            <person name="Furey T.S."/>
            <person name="Miller W."/>
            <person name="Eichler E.E."/>
            <person name="Bork P."/>
            <person name="Suyama M."/>
            <person name="Torrents D."/>
            <person name="Waterston R.H."/>
            <person name="Wilson R.K."/>
        </authorList>
    </citation>
    <scope>NUCLEOTIDE SEQUENCE [LARGE SCALE GENOMIC DNA]</scope>
</reference>
<reference key="2">
    <citation type="journal article" date="2004" name="Nat. Biotechnol.">
        <title>Transcriptome characterization elucidates signaling networks that control human ES cell growth and differentiation.</title>
        <authorList>
            <person name="Brandenberger R."/>
            <person name="Wei H."/>
            <person name="Zhang S."/>
            <person name="Lei S."/>
            <person name="Murage J."/>
            <person name="Fisk G.J."/>
            <person name="Li Y."/>
            <person name="Xu C."/>
            <person name="Fang R."/>
            <person name="Guegler K."/>
            <person name="Rao M.S."/>
            <person name="Mandalam R."/>
            <person name="Lebkowski J."/>
            <person name="Stanton L.W."/>
        </authorList>
    </citation>
    <scope>NUCLEOTIDE SEQUENCE [MRNA] OF 145-366</scope>
</reference>
<proteinExistence type="uncertain"/>
<protein>
    <recommendedName>
        <fullName>Putative uncharacterized protein ENSP00000382790</fullName>
    </recommendedName>
</protein>
<name>YD021_HUMAN</name>
<dbReference type="EMBL" id="AC005768">
    <property type="status" value="NOT_ANNOTATED_CDS"/>
    <property type="molecule type" value="Genomic_DNA"/>
</dbReference>
<dbReference type="EMBL" id="CN284130">
    <property type="status" value="NOT_ANNOTATED_CDS"/>
    <property type="molecule type" value="mRNA"/>
</dbReference>
<dbReference type="GlyGen" id="A8MVM7">
    <property type="glycosylation" value="1 site, 1 O-linked glycan (1 site)"/>
</dbReference>
<dbReference type="BioMuta" id="-"/>
<dbReference type="jPOST" id="A8MVM7"/>
<dbReference type="MassIVE" id="A8MVM7"/>
<dbReference type="PeptideAtlas" id="A8MVM7"/>
<dbReference type="neXtProt" id="NX_A8MVM7"/>
<dbReference type="InParanoid" id="A8MVM7"/>
<dbReference type="PAN-GO" id="A8MVM7">
    <property type="GO annotations" value="0 GO annotations based on evolutionary models"/>
</dbReference>
<dbReference type="PhylomeDB" id="A8MVM7"/>
<dbReference type="Pharos" id="A8MVM7">
    <property type="development level" value="Tdark"/>
</dbReference>
<dbReference type="Proteomes" id="UP000005640">
    <property type="component" value="Unplaced"/>
</dbReference>
<dbReference type="RNAct" id="A8MVM7">
    <property type="molecule type" value="protein"/>
</dbReference>
<dbReference type="InterPro" id="IPR028104">
    <property type="entry name" value="DUF4553"/>
</dbReference>
<dbReference type="PANTHER" id="PTHR14931">
    <property type="entry name" value="GENE 340-RELATED"/>
    <property type="match status" value="1"/>
</dbReference>
<dbReference type="PANTHER" id="PTHR14931:SF1">
    <property type="entry name" value="LIGAND DEPENDENT NUCLEAR RECEPTOR COREPRESSOR LIKE"/>
    <property type="match status" value="1"/>
</dbReference>
<dbReference type="Pfam" id="PF15090">
    <property type="entry name" value="DUF4553"/>
    <property type="match status" value="1"/>
</dbReference>
<evidence type="ECO:0000305" key="1"/>
<feature type="chain" id="PRO_0000341235" description="Putative uncharacterized protein ENSP00000382790">
    <location>
        <begin position="1"/>
        <end position="634"/>
    </location>
</feature>
<accession>A8MVM7</accession>
<sequence>MDKIRHTEADIFKNGSKRMIATVPLRHSIRDRKPSLHFLHSLASSSSLIYRNALLHKSYKLHLQKNKSQKEKHRHSKMKIAYKDTPRNRLSRNAKKCLEDNKLVPISEVSLDPIISSNPLLRWWATSASNDSLLEELNNRFEQITNAWVQVSGDEAENCIHKKREHIENDHFKVASPLETCLLELEVSPVKMLFQKKYDLNELCTWFMQTTETQSLSLVRKANARNPLEVINTRGIKLGTKYSDFNASPFRKHFKKFALSSPSKSAEKLHILHKVANSPLLNVKSNLAIARLKRTEFKRLHHERWKREGKLHNHGTVDWNSKRRNLRFFCQNQFLNKTEGETNADIPLQGKSIVDNQCVLPPEIRGDLQQRVVMPDFKIHASFENKFKSEAKENGTNCSQKDFQKGPRLENVCPNSWRSKTLKDCRIFLRKLNCLEHRNTFKLNTIIYSPESTDSGNTHQTHMEESKRFTLRSHSARQNSFKKQSKEIENANTNNPSADEFADHLGNSKLSKCVNFDKNPDSFEVLSNLNKRKRPPWKITEMSTKRHKRQSCNSGQMANYFSKSLVSKIFGQPNFLAPSMKLVKLGAAKCTSALPHLLICPGFHTNKNIYSRDIEIIFKIYYFNNVDVISFCIW</sequence>
<keyword id="KW-1267">Proteomics identification</keyword>
<keyword id="KW-1185">Reference proteome</keyword>
<organism>
    <name type="scientific">Homo sapiens</name>
    <name type="common">Human</name>
    <dbReference type="NCBI Taxonomy" id="9606"/>
    <lineage>
        <taxon>Eukaryota</taxon>
        <taxon>Metazoa</taxon>
        <taxon>Chordata</taxon>
        <taxon>Craniata</taxon>
        <taxon>Vertebrata</taxon>
        <taxon>Euteleostomi</taxon>
        <taxon>Mammalia</taxon>
        <taxon>Eutheria</taxon>
        <taxon>Euarchontoglires</taxon>
        <taxon>Primates</taxon>
        <taxon>Haplorrhini</taxon>
        <taxon>Catarrhini</taxon>
        <taxon>Hominidae</taxon>
        <taxon>Homo</taxon>
    </lineage>
</organism>
<comment type="caution">
    <text evidence="1">Product of a dubious gene prediction. Encoded in the intron of LCORL1.</text>
</comment>